<name>ACDH1_NOCSJ</name>
<accession>A1SH78</accession>
<protein>
    <recommendedName>
        <fullName evidence="1">Acetaldehyde dehydrogenase 1</fullName>
        <ecNumber evidence="1">1.2.1.10</ecNumber>
    </recommendedName>
    <alternativeName>
        <fullName evidence="1">Acetaldehyde dehydrogenase [acetylating] 1</fullName>
    </alternativeName>
</protein>
<dbReference type="EC" id="1.2.1.10" evidence="1"/>
<dbReference type="EMBL" id="CP000509">
    <property type="protein sequence ID" value="ABL81163.1"/>
    <property type="molecule type" value="Genomic_DNA"/>
</dbReference>
<dbReference type="RefSeq" id="WP_011755110.1">
    <property type="nucleotide sequence ID" value="NC_008699.1"/>
</dbReference>
<dbReference type="SMR" id="A1SH78"/>
<dbReference type="STRING" id="196162.Noca_1650"/>
<dbReference type="KEGG" id="nca:Noca_1650"/>
<dbReference type="eggNOG" id="COG4569">
    <property type="taxonomic scope" value="Bacteria"/>
</dbReference>
<dbReference type="HOGENOM" id="CLU_062208_0_0_11"/>
<dbReference type="OrthoDB" id="9786743at2"/>
<dbReference type="Proteomes" id="UP000000640">
    <property type="component" value="Chromosome"/>
</dbReference>
<dbReference type="GO" id="GO:0008774">
    <property type="term" value="F:acetaldehyde dehydrogenase (acetylating) activity"/>
    <property type="evidence" value="ECO:0007669"/>
    <property type="project" value="UniProtKB-UniRule"/>
</dbReference>
<dbReference type="GO" id="GO:0051287">
    <property type="term" value="F:NAD binding"/>
    <property type="evidence" value="ECO:0007669"/>
    <property type="project" value="UniProtKB-UniRule"/>
</dbReference>
<dbReference type="GO" id="GO:0009056">
    <property type="term" value="P:catabolic process"/>
    <property type="evidence" value="ECO:0007669"/>
    <property type="project" value="UniProtKB-KW"/>
</dbReference>
<dbReference type="CDD" id="cd23933">
    <property type="entry name" value="ALDH_C"/>
    <property type="match status" value="1"/>
</dbReference>
<dbReference type="Gene3D" id="3.30.360.10">
    <property type="entry name" value="Dihydrodipicolinate Reductase, domain 2"/>
    <property type="match status" value="1"/>
</dbReference>
<dbReference type="Gene3D" id="3.40.50.720">
    <property type="entry name" value="NAD(P)-binding Rossmann-like Domain"/>
    <property type="match status" value="1"/>
</dbReference>
<dbReference type="HAMAP" id="MF_01657">
    <property type="entry name" value="Ac_ald_DH_ac"/>
    <property type="match status" value="1"/>
</dbReference>
<dbReference type="InterPro" id="IPR003361">
    <property type="entry name" value="Acetaldehyde_dehydrogenase"/>
</dbReference>
<dbReference type="InterPro" id="IPR015426">
    <property type="entry name" value="Acetylaldehyde_DH_C"/>
</dbReference>
<dbReference type="InterPro" id="IPR036291">
    <property type="entry name" value="NAD(P)-bd_dom_sf"/>
</dbReference>
<dbReference type="InterPro" id="IPR000534">
    <property type="entry name" value="Semialdehyde_DH_NAD-bd"/>
</dbReference>
<dbReference type="NCBIfam" id="TIGR03215">
    <property type="entry name" value="ac_ald_DH_ac"/>
    <property type="match status" value="1"/>
</dbReference>
<dbReference type="NCBIfam" id="NF006157">
    <property type="entry name" value="PRK08300.1"/>
    <property type="match status" value="1"/>
</dbReference>
<dbReference type="Pfam" id="PF09290">
    <property type="entry name" value="AcetDehyd-dimer"/>
    <property type="match status" value="1"/>
</dbReference>
<dbReference type="Pfam" id="PF01118">
    <property type="entry name" value="Semialdhyde_dh"/>
    <property type="match status" value="1"/>
</dbReference>
<dbReference type="PIRSF" id="PIRSF015689">
    <property type="entry name" value="Actaldh_dh_actl"/>
    <property type="match status" value="1"/>
</dbReference>
<dbReference type="SMART" id="SM00859">
    <property type="entry name" value="Semialdhyde_dh"/>
    <property type="match status" value="1"/>
</dbReference>
<dbReference type="SUPFAM" id="SSF55347">
    <property type="entry name" value="Glyceraldehyde-3-phosphate dehydrogenase-like, C-terminal domain"/>
    <property type="match status" value="1"/>
</dbReference>
<dbReference type="SUPFAM" id="SSF51735">
    <property type="entry name" value="NAD(P)-binding Rossmann-fold domains"/>
    <property type="match status" value="1"/>
</dbReference>
<reference key="1">
    <citation type="submission" date="2006-12" db="EMBL/GenBank/DDBJ databases">
        <title>Complete sequence of chromosome 1 of Nocardioides sp. JS614.</title>
        <authorList>
            <person name="Copeland A."/>
            <person name="Lucas S."/>
            <person name="Lapidus A."/>
            <person name="Barry K."/>
            <person name="Detter J.C."/>
            <person name="Glavina del Rio T."/>
            <person name="Hammon N."/>
            <person name="Israni S."/>
            <person name="Dalin E."/>
            <person name="Tice H."/>
            <person name="Pitluck S."/>
            <person name="Thompson L.S."/>
            <person name="Brettin T."/>
            <person name="Bruce D."/>
            <person name="Han C."/>
            <person name="Tapia R."/>
            <person name="Schmutz J."/>
            <person name="Larimer F."/>
            <person name="Land M."/>
            <person name="Hauser L."/>
            <person name="Kyrpides N."/>
            <person name="Kim E."/>
            <person name="Mattes T."/>
            <person name="Gossett J."/>
            <person name="Richardson P."/>
        </authorList>
    </citation>
    <scope>NUCLEOTIDE SEQUENCE [LARGE SCALE GENOMIC DNA]</scope>
    <source>
        <strain>ATCC BAA-499 / JS614</strain>
    </source>
</reference>
<evidence type="ECO:0000255" key="1">
    <source>
        <dbReference type="HAMAP-Rule" id="MF_01657"/>
    </source>
</evidence>
<feature type="chain" id="PRO_0000387698" description="Acetaldehyde dehydrogenase 1">
    <location>
        <begin position="1"/>
        <end position="314"/>
    </location>
</feature>
<feature type="active site" description="Acyl-thioester intermediate" evidence="1">
    <location>
        <position position="129"/>
    </location>
</feature>
<feature type="binding site" evidence="1">
    <location>
        <begin position="11"/>
        <end position="14"/>
    </location>
    <ligand>
        <name>NAD(+)</name>
        <dbReference type="ChEBI" id="CHEBI:57540"/>
    </ligand>
</feature>
<feature type="binding site" evidence="1">
    <location>
        <begin position="160"/>
        <end position="168"/>
    </location>
    <ligand>
        <name>NAD(+)</name>
        <dbReference type="ChEBI" id="CHEBI:57540"/>
    </ligand>
</feature>
<feature type="binding site" evidence="1">
    <location>
        <position position="292"/>
    </location>
    <ligand>
        <name>NAD(+)</name>
        <dbReference type="ChEBI" id="CHEBI:57540"/>
    </ligand>
</feature>
<sequence>MTRTKVAIIGSGNIGTDLMIKVLRTSKHLEMGAMVGIDPASDGLARAGRFGVPTTAEGVEGLVALPGFDDIEIVFDATSAGAHVVNAARLLPLGKRLIDLTPAALGPFTIPAVNLEDHLEAPNLNMVTCGGQATIPIVAAISRVVPVEYAEIVASIASRSAGPGTRANIDEFTETTSSAIVEVGGATRGKAIIILNPAEPPLIMRDTVFALVTAADPDVHEQIRASVDKMVADVAAYVPGYRLKQAVQVTEIPADQPVHTLLAPDAERPTHQVSVFLEVEGAAHYLPAYAGNLDIMTSAALQVAERIAAGKADR</sequence>
<gene>
    <name type="ordered locus">Noca_1650</name>
</gene>
<proteinExistence type="inferred from homology"/>
<comment type="catalytic activity">
    <reaction evidence="1">
        <text>acetaldehyde + NAD(+) + CoA = acetyl-CoA + NADH + H(+)</text>
        <dbReference type="Rhea" id="RHEA:23288"/>
        <dbReference type="ChEBI" id="CHEBI:15343"/>
        <dbReference type="ChEBI" id="CHEBI:15378"/>
        <dbReference type="ChEBI" id="CHEBI:57287"/>
        <dbReference type="ChEBI" id="CHEBI:57288"/>
        <dbReference type="ChEBI" id="CHEBI:57540"/>
        <dbReference type="ChEBI" id="CHEBI:57945"/>
        <dbReference type="EC" id="1.2.1.10"/>
    </reaction>
</comment>
<comment type="similarity">
    <text evidence="1">Belongs to the acetaldehyde dehydrogenase family.</text>
</comment>
<organism>
    <name type="scientific">Nocardioides sp. (strain ATCC BAA-499 / JS614)</name>
    <dbReference type="NCBI Taxonomy" id="196162"/>
    <lineage>
        <taxon>Bacteria</taxon>
        <taxon>Bacillati</taxon>
        <taxon>Actinomycetota</taxon>
        <taxon>Actinomycetes</taxon>
        <taxon>Propionibacteriales</taxon>
        <taxon>Nocardioidaceae</taxon>
        <taxon>Nocardioides</taxon>
    </lineage>
</organism>
<keyword id="KW-0058">Aromatic hydrocarbons catabolism</keyword>
<keyword id="KW-0520">NAD</keyword>
<keyword id="KW-0560">Oxidoreductase</keyword>
<keyword id="KW-1185">Reference proteome</keyword>